<sequence length="89" mass="10560">MALTQERKNEIIAQFRTHETDTGSPEVQIAVLTEQINTLNEHLRTHKKDHHSRRGLLKMVGKRRNLLTYLRNSDITRYRELITKLGLRR</sequence>
<accession>Q81WM7</accession>
<accession>Q6HUS8</accession>
<accession>Q6KP09</accession>
<gene>
    <name evidence="1" type="primary">rpsO</name>
    <name type="ordered locus">BA_3945</name>
    <name type="ordered locus">GBAA_3945</name>
    <name type="ordered locus">BAS3659</name>
</gene>
<reference key="1">
    <citation type="journal article" date="2003" name="Nature">
        <title>The genome sequence of Bacillus anthracis Ames and comparison to closely related bacteria.</title>
        <authorList>
            <person name="Read T.D."/>
            <person name="Peterson S.N."/>
            <person name="Tourasse N.J."/>
            <person name="Baillie L.W."/>
            <person name="Paulsen I.T."/>
            <person name="Nelson K.E."/>
            <person name="Tettelin H."/>
            <person name="Fouts D.E."/>
            <person name="Eisen J.A."/>
            <person name="Gill S.R."/>
            <person name="Holtzapple E.K."/>
            <person name="Okstad O.A."/>
            <person name="Helgason E."/>
            <person name="Rilstone J."/>
            <person name="Wu M."/>
            <person name="Kolonay J.F."/>
            <person name="Beanan M.J."/>
            <person name="Dodson R.J."/>
            <person name="Brinkac L.M."/>
            <person name="Gwinn M.L."/>
            <person name="DeBoy R.T."/>
            <person name="Madpu R."/>
            <person name="Daugherty S.C."/>
            <person name="Durkin A.S."/>
            <person name="Haft D.H."/>
            <person name="Nelson W.C."/>
            <person name="Peterson J.D."/>
            <person name="Pop M."/>
            <person name="Khouri H.M."/>
            <person name="Radune D."/>
            <person name="Benton J.L."/>
            <person name="Mahamoud Y."/>
            <person name="Jiang L."/>
            <person name="Hance I.R."/>
            <person name="Weidman J.F."/>
            <person name="Berry K.J."/>
            <person name="Plaut R.D."/>
            <person name="Wolf A.M."/>
            <person name="Watkins K.L."/>
            <person name="Nierman W.C."/>
            <person name="Hazen A."/>
            <person name="Cline R.T."/>
            <person name="Redmond C."/>
            <person name="Thwaite J.E."/>
            <person name="White O."/>
            <person name="Salzberg S.L."/>
            <person name="Thomason B."/>
            <person name="Friedlander A.M."/>
            <person name="Koehler T.M."/>
            <person name="Hanna P.C."/>
            <person name="Kolstoe A.-B."/>
            <person name="Fraser C.M."/>
        </authorList>
    </citation>
    <scope>NUCLEOTIDE SEQUENCE [LARGE SCALE GENOMIC DNA]</scope>
    <source>
        <strain>Ames / isolate Porton</strain>
    </source>
</reference>
<reference key="2">
    <citation type="journal article" date="2009" name="J. Bacteriol.">
        <title>The complete genome sequence of Bacillus anthracis Ames 'Ancestor'.</title>
        <authorList>
            <person name="Ravel J."/>
            <person name="Jiang L."/>
            <person name="Stanley S.T."/>
            <person name="Wilson M.R."/>
            <person name="Decker R.S."/>
            <person name="Read T.D."/>
            <person name="Worsham P."/>
            <person name="Keim P.S."/>
            <person name="Salzberg S.L."/>
            <person name="Fraser-Liggett C.M."/>
            <person name="Rasko D.A."/>
        </authorList>
    </citation>
    <scope>NUCLEOTIDE SEQUENCE [LARGE SCALE GENOMIC DNA]</scope>
    <source>
        <strain>Ames ancestor</strain>
    </source>
</reference>
<reference key="3">
    <citation type="submission" date="2004-01" db="EMBL/GenBank/DDBJ databases">
        <title>Complete genome sequence of Bacillus anthracis Sterne.</title>
        <authorList>
            <person name="Brettin T.S."/>
            <person name="Bruce D."/>
            <person name="Challacombe J.F."/>
            <person name="Gilna P."/>
            <person name="Han C."/>
            <person name="Hill K."/>
            <person name="Hitchcock P."/>
            <person name="Jackson P."/>
            <person name="Keim P."/>
            <person name="Longmire J."/>
            <person name="Lucas S."/>
            <person name="Okinaka R."/>
            <person name="Richardson P."/>
            <person name="Rubin E."/>
            <person name="Tice H."/>
        </authorList>
    </citation>
    <scope>NUCLEOTIDE SEQUENCE [LARGE SCALE GENOMIC DNA]</scope>
    <source>
        <strain>Sterne</strain>
    </source>
</reference>
<dbReference type="EMBL" id="AE016879">
    <property type="protein sequence ID" value="AAP27675.1"/>
    <property type="molecule type" value="Genomic_DNA"/>
</dbReference>
<dbReference type="EMBL" id="AE017334">
    <property type="protein sequence ID" value="AAT33059.1"/>
    <property type="molecule type" value="Genomic_DNA"/>
</dbReference>
<dbReference type="EMBL" id="AE017225">
    <property type="protein sequence ID" value="AAT55961.1"/>
    <property type="molecule type" value="Genomic_DNA"/>
</dbReference>
<dbReference type="RefSeq" id="NP_846189.1">
    <property type="nucleotide sequence ID" value="NC_003997.3"/>
</dbReference>
<dbReference type="RefSeq" id="WP_001229392.1">
    <property type="nucleotide sequence ID" value="NZ_WXXJ01000026.1"/>
</dbReference>
<dbReference type="RefSeq" id="YP_029910.1">
    <property type="nucleotide sequence ID" value="NC_005945.1"/>
</dbReference>
<dbReference type="SMR" id="Q81WM7"/>
<dbReference type="STRING" id="261594.GBAA_3945"/>
<dbReference type="DNASU" id="1086841"/>
<dbReference type="GeneID" id="93007304"/>
<dbReference type="KEGG" id="ban:BA_3945"/>
<dbReference type="KEGG" id="bar:GBAA_3945"/>
<dbReference type="KEGG" id="bat:BAS3659"/>
<dbReference type="PATRIC" id="fig|198094.11.peg.3915"/>
<dbReference type="eggNOG" id="COG0184">
    <property type="taxonomic scope" value="Bacteria"/>
</dbReference>
<dbReference type="HOGENOM" id="CLU_148518_0_0_9"/>
<dbReference type="OMA" id="RINYLTE"/>
<dbReference type="OrthoDB" id="9799262at2"/>
<dbReference type="Proteomes" id="UP000000427">
    <property type="component" value="Chromosome"/>
</dbReference>
<dbReference type="Proteomes" id="UP000000594">
    <property type="component" value="Chromosome"/>
</dbReference>
<dbReference type="GO" id="GO:0022627">
    <property type="term" value="C:cytosolic small ribosomal subunit"/>
    <property type="evidence" value="ECO:0007669"/>
    <property type="project" value="TreeGrafter"/>
</dbReference>
<dbReference type="GO" id="GO:0019843">
    <property type="term" value="F:rRNA binding"/>
    <property type="evidence" value="ECO:0007669"/>
    <property type="project" value="UniProtKB-UniRule"/>
</dbReference>
<dbReference type="GO" id="GO:0003735">
    <property type="term" value="F:structural constituent of ribosome"/>
    <property type="evidence" value="ECO:0007669"/>
    <property type="project" value="InterPro"/>
</dbReference>
<dbReference type="GO" id="GO:0006412">
    <property type="term" value="P:translation"/>
    <property type="evidence" value="ECO:0007669"/>
    <property type="project" value="UniProtKB-UniRule"/>
</dbReference>
<dbReference type="CDD" id="cd00353">
    <property type="entry name" value="Ribosomal_S15p_S13e"/>
    <property type="match status" value="1"/>
</dbReference>
<dbReference type="FunFam" id="1.10.287.10:FF:000002">
    <property type="entry name" value="30S ribosomal protein S15"/>
    <property type="match status" value="1"/>
</dbReference>
<dbReference type="Gene3D" id="6.10.250.3130">
    <property type="match status" value="1"/>
</dbReference>
<dbReference type="Gene3D" id="1.10.287.10">
    <property type="entry name" value="S15/NS1, RNA-binding"/>
    <property type="match status" value="1"/>
</dbReference>
<dbReference type="HAMAP" id="MF_01343_B">
    <property type="entry name" value="Ribosomal_uS15_B"/>
    <property type="match status" value="1"/>
</dbReference>
<dbReference type="InterPro" id="IPR000589">
    <property type="entry name" value="Ribosomal_uS15"/>
</dbReference>
<dbReference type="InterPro" id="IPR005290">
    <property type="entry name" value="Ribosomal_uS15_bac-type"/>
</dbReference>
<dbReference type="InterPro" id="IPR009068">
    <property type="entry name" value="uS15_NS1_RNA-bd_sf"/>
</dbReference>
<dbReference type="NCBIfam" id="TIGR00952">
    <property type="entry name" value="S15_bact"/>
    <property type="match status" value="1"/>
</dbReference>
<dbReference type="PANTHER" id="PTHR23321">
    <property type="entry name" value="RIBOSOMAL PROTEIN S15, BACTERIAL AND ORGANELLAR"/>
    <property type="match status" value="1"/>
</dbReference>
<dbReference type="PANTHER" id="PTHR23321:SF26">
    <property type="entry name" value="SMALL RIBOSOMAL SUBUNIT PROTEIN US15M"/>
    <property type="match status" value="1"/>
</dbReference>
<dbReference type="Pfam" id="PF00312">
    <property type="entry name" value="Ribosomal_S15"/>
    <property type="match status" value="1"/>
</dbReference>
<dbReference type="SMART" id="SM01387">
    <property type="entry name" value="Ribosomal_S15"/>
    <property type="match status" value="1"/>
</dbReference>
<dbReference type="SUPFAM" id="SSF47060">
    <property type="entry name" value="S15/NS1 RNA-binding domain"/>
    <property type="match status" value="1"/>
</dbReference>
<dbReference type="PROSITE" id="PS00362">
    <property type="entry name" value="RIBOSOMAL_S15"/>
    <property type="match status" value="1"/>
</dbReference>
<evidence type="ECO:0000255" key="1">
    <source>
        <dbReference type="HAMAP-Rule" id="MF_01343"/>
    </source>
</evidence>
<evidence type="ECO:0000305" key="2"/>
<name>RS15_BACAN</name>
<feature type="chain" id="PRO_0000115373" description="Small ribosomal subunit protein uS15">
    <location>
        <begin position="1"/>
        <end position="89"/>
    </location>
</feature>
<organism>
    <name type="scientific">Bacillus anthracis</name>
    <dbReference type="NCBI Taxonomy" id="1392"/>
    <lineage>
        <taxon>Bacteria</taxon>
        <taxon>Bacillati</taxon>
        <taxon>Bacillota</taxon>
        <taxon>Bacilli</taxon>
        <taxon>Bacillales</taxon>
        <taxon>Bacillaceae</taxon>
        <taxon>Bacillus</taxon>
        <taxon>Bacillus cereus group</taxon>
    </lineage>
</organism>
<comment type="function">
    <text evidence="1">One of the primary rRNA binding proteins, it binds directly to 16S rRNA where it helps nucleate assembly of the platform of the 30S subunit by binding and bridging several RNA helices of the 16S rRNA.</text>
</comment>
<comment type="function">
    <text evidence="1">Forms an intersubunit bridge (bridge B4) with the 23S rRNA of the 50S subunit in the ribosome.</text>
</comment>
<comment type="subunit">
    <text evidence="1">Part of the 30S ribosomal subunit. Forms a bridge to the 50S subunit in the 70S ribosome, contacting the 23S rRNA.</text>
</comment>
<comment type="similarity">
    <text evidence="1">Belongs to the universal ribosomal protein uS15 family.</text>
</comment>
<keyword id="KW-1185">Reference proteome</keyword>
<keyword id="KW-0687">Ribonucleoprotein</keyword>
<keyword id="KW-0689">Ribosomal protein</keyword>
<keyword id="KW-0694">RNA-binding</keyword>
<keyword id="KW-0699">rRNA-binding</keyword>
<proteinExistence type="inferred from homology"/>
<protein>
    <recommendedName>
        <fullName evidence="1">Small ribosomal subunit protein uS15</fullName>
    </recommendedName>
    <alternativeName>
        <fullName evidence="2">30S ribosomal protein S15</fullName>
    </alternativeName>
</protein>